<sequence>MFALPGYDAFLGFLLIAAAVPVLALVTNKLLAPKSRAGERQLTYESGMEPIGGAWIQFNIRYYMFALVFVIFDVETVFLYPWAVAFNRLGLLAFIEALIFIAILLVALAYAWRKGALEWS</sequence>
<dbReference type="EC" id="7.1.1.-" evidence="1"/>
<dbReference type="EMBL" id="CP000097">
    <property type="protein sequence ID" value="ABB25205.1"/>
    <property type="molecule type" value="Genomic_DNA"/>
</dbReference>
<dbReference type="RefSeq" id="WP_011359066.1">
    <property type="nucleotide sequence ID" value="NC_007513.1"/>
</dbReference>
<dbReference type="SMR" id="Q3B0C3"/>
<dbReference type="STRING" id="316279.Syncc9902_0230"/>
<dbReference type="KEGG" id="sye:Syncc9902_0230"/>
<dbReference type="eggNOG" id="COG0838">
    <property type="taxonomic scope" value="Bacteria"/>
</dbReference>
<dbReference type="HOGENOM" id="CLU_119549_1_1_3"/>
<dbReference type="OrthoDB" id="9791970at2"/>
<dbReference type="Proteomes" id="UP000002712">
    <property type="component" value="Chromosome"/>
</dbReference>
<dbReference type="GO" id="GO:0030964">
    <property type="term" value="C:NADH dehydrogenase complex"/>
    <property type="evidence" value="ECO:0007669"/>
    <property type="project" value="TreeGrafter"/>
</dbReference>
<dbReference type="GO" id="GO:0031676">
    <property type="term" value="C:plasma membrane-derived thylakoid membrane"/>
    <property type="evidence" value="ECO:0007669"/>
    <property type="project" value="UniProtKB-SubCell"/>
</dbReference>
<dbReference type="GO" id="GO:0008137">
    <property type="term" value="F:NADH dehydrogenase (ubiquinone) activity"/>
    <property type="evidence" value="ECO:0007669"/>
    <property type="project" value="InterPro"/>
</dbReference>
<dbReference type="GO" id="GO:0048038">
    <property type="term" value="F:quinone binding"/>
    <property type="evidence" value="ECO:0007669"/>
    <property type="project" value="UniProtKB-KW"/>
</dbReference>
<dbReference type="GO" id="GO:0019684">
    <property type="term" value="P:photosynthesis, light reaction"/>
    <property type="evidence" value="ECO:0007669"/>
    <property type="project" value="UniProtKB-UniRule"/>
</dbReference>
<dbReference type="Gene3D" id="1.20.58.1610">
    <property type="entry name" value="NADH:ubiquinone/plastoquinone oxidoreductase, chain 3"/>
    <property type="match status" value="1"/>
</dbReference>
<dbReference type="HAMAP" id="MF_01394">
    <property type="entry name" value="NDH1_NuoA"/>
    <property type="match status" value="1"/>
</dbReference>
<dbReference type="InterPro" id="IPR023043">
    <property type="entry name" value="NAD(P)H_OxRDtase_bac/plastid"/>
</dbReference>
<dbReference type="InterPro" id="IPR000440">
    <property type="entry name" value="NADH_UbQ/plastoQ_OxRdtase_su3"/>
</dbReference>
<dbReference type="InterPro" id="IPR038430">
    <property type="entry name" value="NDAH_ubi_oxred_su3_sf"/>
</dbReference>
<dbReference type="PANTHER" id="PTHR11058">
    <property type="entry name" value="NADH-UBIQUINONE OXIDOREDUCTASE CHAIN 3"/>
    <property type="match status" value="1"/>
</dbReference>
<dbReference type="PANTHER" id="PTHR11058:SF9">
    <property type="entry name" value="NADH-UBIQUINONE OXIDOREDUCTASE CHAIN 3"/>
    <property type="match status" value="1"/>
</dbReference>
<dbReference type="Pfam" id="PF00507">
    <property type="entry name" value="Oxidored_q4"/>
    <property type="match status" value="1"/>
</dbReference>
<accession>Q3B0C3</accession>
<organism>
    <name type="scientific">Synechococcus sp. (strain CC9902)</name>
    <dbReference type="NCBI Taxonomy" id="316279"/>
    <lineage>
        <taxon>Bacteria</taxon>
        <taxon>Bacillati</taxon>
        <taxon>Cyanobacteriota</taxon>
        <taxon>Cyanophyceae</taxon>
        <taxon>Synechococcales</taxon>
        <taxon>Synechococcaceae</taxon>
        <taxon>Synechococcus</taxon>
    </lineage>
</organism>
<feature type="chain" id="PRO_0000362790" description="NAD(P)H-quinone oxidoreductase subunit 3">
    <location>
        <begin position="1"/>
        <end position="120"/>
    </location>
</feature>
<feature type="transmembrane region" description="Helical" evidence="1">
    <location>
        <begin position="6"/>
        <end position="26"/>
    </location>
</feature>
<feature type="transmembrane region" description="Helical" evidence="1">
    <location>
        <begin position="64"/>
        <end position="84"/>
    </location>
</feature>
<feature type="transmembrane region" description="Helical" evidence="1">
    <location>
        <begin position="89"/>
        <end position="109"/>
    </location>
</feature>
<comment type="function">
    <text evidence="1">NDH-1 shuttles electrons from an unknown electron donor, via FMN and iron-sulfur (Fe-S) centers, to quinones in the respiratory and/or the photosynthetic chain. The immediate electron acceptor for the enzyme in this species is believed to be plastoquinone. Couples the redox reaction to proton translocation, and thus conserves the redox energy in a proton gradient. Cyanobacterial NDH-1 also plays a role in inorganic carbon-concentration.</text>
</comment>
<comment type="catalytic activity">
    <reaction evidence="1">
        <text>a plastoquinone + NADH + (n+1) H(+)(in) = a plastoquinol + NAD(+) + n H(+)(out)</text>
        <dbReference type="Rhea" id="RHEA:42608"/>
        <dbReference type="Rhea" id="RHEA-COMP:9561"/>
        <dbReference type="Rhea" id="RHEA-COMP:9562"/>
        <dbReference type="ChEBI" id="CHEBI:15378"/>
        <dbReference type="ChEBI" id="CHEBI:17757"/>
        <dbReference type="ChEBI" id="CHEBI:57540"/>
        <dbReference type="ChEBI" id="CHEBI:57945"/>
        <dbReference type="ChEBI" id="CHEBI:62192"/>
    </reaction>
</comment>
<comment type="catalytic activity">
    <reaction evidence="1">
        <text>a plastoquinone + NADPH + (n+1) H(+)(in) = a plastoquinol + NADP(+) + n H(+)(out)</text>
        <dbReference type="Rhea" id="RHEA:42612"/>
        <dbReference type="Rhea" id="RHEA-COMP:9561"/>
        <dbReference type="Rhea" id="RHEA-COMP:9562"/>
        <dbReference type="ChEBI" id="CHEBI:15378"/>
        <dbReference type="ChEBI" id="CHEBI:17757"/>
        <dbReference type="ChEBI" id="CHEBI:57783"/>
        <dbReference type="ChEBI" id="CHEBI:58349"/>
        <dbReference type="ChEBI" id="CHEBI:62192"/>
    </reaction>
</comment>
<comment type="subunit">
    <text evidence="1">NDH-1 can be composed of about 15 different subunits; different subcomplexes with different compositions have been identified which probably have different functions.</text>
</comment>
<comment type="subcellular location">
    <subcellularLocation>
        <location evidence="1">Cellular thylakoid membrane</location>
        <topology evidence="1">Multi-pass membrane protein</topology>
    </subcellularLocation>
</comment>
<comment type="similarity">
    <text evidence="1">Belongs to the complex I subunit 3 family.</text>
</comment>
<protein>
    <recommendedName>
        <fullName evidence="1">NAD(P)H-quinone oxidoreductase subunit 3</fullName>
        <ecNumber evidence="1">7.1.1.-</ecNumber>
    </recommendedName>
    <alternativeName>
        <fullName evidence="1">NAD(P)H dehydrogenase subunit 3</fullName>
    </alternativeName>
    <alternativeName>
        <fullName evidence="1">NADH-plastoquinone oxidoreductase subunit 3</fullName>
    </alternativeName>
    <alternativeName>
        <fullName evidence="1">NDH-1 subunit 3</fullName>
        <shortName evidence="1">NDH-C</shortName>
    </alternativeName>
</protein>
<gene>
    <name evidence="1" type="primary">ndhC</name>
    <name type="ordered locus">Syncc9902_0230</name>
</gene>
<proteinExistence type="inferred from homology"/>
<reference key="1">
    <citation type="submission" date="2005-08" db="EMBL/GenBank/DDBJ databases">
        <title>Complete sequence of Synechococcus sp. CC9902.</title>
        <authorList>
            <person name="Copeland A."/>
            <person name="Lucas S."/>
            <person name="Lapidus A."/>
            <person name="Barry K."/>
            <person name="Detter J.C."/>
            <person name="Glavina T."/>
            <person name="Hammon N."/>
            <person name="Israni S."/>
            <person name="Pitluck S."/>
            <person name="Martinez M."/>
            <person name="Schmutz J."/>
            <person name="Larimer F."/>
            <person name="Land M."/>
            <person name="Kyrpides N."/>
            <person name="Ivanova N."/>
            <person name="Richardson P."/>
        </authorList>
    </citation>
    <scope>NUCLEOTIDE SEQUENCE [LARGE SCALE GENOMIC DNA]</scope>
    <source>
        <strain>CC9902</strain>
    </source>
</reference>
<evidence type="ECO:0000255" key="1">
    <source>
        <dbReference type="HAMAP-Rule" id="MF_01394"/>
    </source>
</evidence>
<name>NU3C_SYNS9</name>
<keyword id="KW-0472">Membrane</keyword>
<keyword id="KW-0520">NAD</keyword>
<keyword id="KW-0521">NADP</keyword>
<keyword id="KW-0618">Plastoquinone</keyword>
<keyword id="KW-0874">Quinone</keyword>
<keyword id="KW-1185">Reference proteome</keyword>
<keyword id="KW-0793">Thylakoid</keyword>
<keyword id="KW-1278">Translocase</keyword>
<keyword id="KW-0812">Transmembrane</keyword>
<keyword id="KW-1133">Transmembrane helix</keyword>
<keyword id="KW-0813">Transport</keyword>